<protein>
    <recommendedName>
        <fullName evidence="1">Small ribosomal subunit protein uS13</fullName>
    </recommendedName>
    <alternativeName>
        <fullName evidence="3">30S ribosomal protein S13</fullName>
    </alternativeName>
</protein>
<proteinExistence type="inferred from homology"/>
<feature type="chain" id="PRO_1000165592" description="Small ribosomal subunit protein uS13">
    <location>
        <begin position="1"/>
        <end position="122"/>
    </location>
</feature>
<feature type="region of interest" description="Disordered" evidence="2">
    <location>
        <begin position="97"/>
        <end position="122"/>
    </location>
</feature>
<keyword id="KW-0687">Ribonucleoprotein</keyword>
<keyword id="KW-0689">Ribosomal protein</keyword>
<keyword id="KW-0694">RNA-binding</keyword>
<keyword id="KW-0699">rRNA-binding</keyword>
<keyword id="KW-0820">tRNA-binding</keyword>
<dbReference type="EMBL" id="CP000628">
    <property type="protein sequence ID" value="ACM26301.1"/>
    <property type="molecule type" value="Genomic_DNA"/>
</dbReference>
<dbReference type="RefSeq" id="WP_007690791.1">
    <property type="nucleotide sequence ID" value="NC_011985.1"/>
</dbReference>
<dbReference type="SMR" id="B9JDV0"/>
<dbReference type="STRING" id="311403.Arad_2003"/>
<dbReference type="GeneID" id="86848189"/>
<dbReference type="KEGG" id="ara:Arad_2003"/>
<dbReference type="eggNOG" id="COG0099">
    <property type="taxonomic scope" value="Bacteria"/>
</dbReference>
<dbReference type="HOGENOM" id="CLU_103849_1_2_5"/>
<dbReference type="Proteomes" id="UP000001600">
    <property type="component" value="Chromosome 1"/>
</dbReference>
<dbReference type="GO" id="GO:0005829">
    <property type="term" value="C:cytosol"/>
    <property type="evidence" value="ECO:0007669"/>
    <property type="project" value="TreeGrafter"/>
</dbReference>
<dbReference type="GO" id="GO:0015935">
    <property type="term" value="C:small ribosomal subunit"/>
    <property type="evidence" value="ECO:0007669"/>
    <property type="project" value="TreeGrafter"/>
</dbReference>
<dbReference type="GO" id="GO:0019843">
    <property type="term" value="F:rRNA binding"/>
    <property type="evidence" value="ECO:0007669"/>
    <property type="project" value="UniProtKB-UniRule"/>
</dbReference>
<dbReference type="GO" id="GO:0003735">
    <property type="term" value="F:structural constituent of ribosome"/>
    <property type="evidence" value="ECO:0007669"/>
    <property type="project" value="InterPro"/>
</dbReference>
<dbReference type="GO" id="GO:0000049">
    <property type="term" value="F:tRNA binding"/>
    <property type="evidence" value="ECO:0007669"/>
    <property type="project" value="UniProtKB-UniRule"/>
</dbReference>
<dbReference type="GO" id="GO:0006412">
    <property type="term" value="P:translation"/>
    <property type="evidence" value="ECO:0007669"/>
    <property type="project" value="UniProtKB-UniRule"/>
</dbReference>
<dbReference type="FunFam" id="1.10.8.50:FF:000001">
    <property type="entry name" value="30S ribosomal protein S13"/>
    <property type="match status" value="1"/>
</dbReference>
<dbReference type="FunFam" id="4.10.910.10:FF:000001">
    <property type="entry name" value="30S ribosomal protein S13"/>
    <property type="match status" value="1"/>
</dbReference>
<dbReference type="Gene3D" id="1.10.8.50">
    <property type="match status" value="1"/>
</dbReference>
<dbReference type="Gene3D" id="4.10.910.10">
    <property type="entry name" value="30s ribosomal protein s13, domain 2"/>
    <property type="match status" value="1"/>
</dbReference>
<dbReference type="HAMAP" id="MF_01315">
    <property type="entry name" value="Ribosomal_uS13"/>
    <property type="match status" value="1"/>
</dbReference>
<dbReference type="InterPro" id="IPR027437">
    <property type="entry name" value="Rbsml_uS13_C"/>
</dbReference>
<dbReference type="InterPro" id="IPR001892">
    <property type="entry name" value="Ribosomal_uS13"/>
</dbReference>
<dbReference type="InterPro" id="IPR010979">
    <property type="entry name" value="Ribosomal_uS13-like_H2TH"/>
</dbReference>
<dbReference type="InterPro" id="IPR019980">
    <property type="entry name" value="Ribosomal_uS13_bac-type"/>
</dbReference>
<dbReference type="InterPro" id="IPR018269">
    <property type="entry name" value="Ribosomal_uS13_CS"/>
</dbReference>
<dbReference type="NCBIfam" id="TIGR03631">
    <property type="entry name" value="uS13_bact"/>
    <property type="match status" value="1"/>
</dbReference>
<dbReference type="PANTHER" id="PTHR10871">
    <property type="entry name" value="30S RIBOSOMAL PROTEIN S13/40S RIBOSOMAL PROTEIN S18"/>
    <property type="match status" value="1"/>
</dbReference>
<dbReference type="PANTHER" id="PTHR10871:SF1">
    <property type="entry name" value="SMALL RIBOSOMAL SUBUNIT PROTEIN US13M"/>
    <property type="match status" value="1"/>
</dbReference>
<dbReference type="Pfam" id="PF00416">
    <property type="entry name" value="Ribosomal_S13"/>
    <property type="match status" value="1"/>
</dbReference>
<dbReference type="PIRSF" id="PIRSF002134">
    <property type="entry name" value="Ribosomal_S13"/>
    <property type="match status" value="1"/>
</dbReference>
<dbReference type="SUPFAM" id="SSF46946">
    <property type="entry name" value="S13-like H2TH domain"/>
    <property type="match status" value="1"/>
</dbReference>
<dbReference type="PROSITE" id="PS00646">
    <property type="entry name" value="RIBOSOMAL_S13_1"/>
    <property type="match status" value="1"/>
</dbReference>
<dbReference type="PROSITE" id="PS50159">
    <property type="entry name" value="RIBOSOMAL_S13_2"/>
    <property type="match status" value="1"/>
</dbReference>
<sequence>MARIAGVNIPTAKRVVIALRYIHGIGPKFAQEICEKVGIPAERRVNQLTDAEVLQIRETIDRDYQVEGDLRRETSMNIKRLMDLGSYRGLRHRRSLPVRGQRTHTNARTRKGPAKAIAGKKK</sequence>
<evidence type="ECO:0000255" key="1">
    <source>
        <dbReference type="HAMAP-Rule" id="MF_01315"/>
    </source>
</evidence>
<evidence type="ECO:0000256" key="2">
    <source>
        <dbReference type="SAM" id="MobiDB-lite"/>
    </source>
</evidence>
<evidence type="ECO:0000305" key="3"/>
<reference key="1">
    <citation type="journal article" date="2009" name="J. Bacteriol.">
        <title>Genome sequences of three Agrobacterium biovars help elucidate the evolution of multichromosome genomes in bacteria.</title>
        <authorList>
            <person name="Slater S.C."/>
            <person name="Goldman B.S."/>
            <person name="Goodner B."/>
            <person name="Setubal J.C."/>
            <person name="Farrand S.K."/>
            <person name="Nester E.W."/>
            <person name="Burr T.J."/>
            <person name="Banta L."/>
            <person name="Dickerman A.W."/>
            <person name="Paulsen I."/>
            <person name="Otten L."/>
            <person name="Suen G."/>
            <person name="Welch R."/>
            <person name="Almeida N.F."/>
            <person name="Arnold F."/>
            <person name="Burton O.T."/>
            <person name="Du Z."/>
            <person name="Ewing A."/>
            <person name="Godsy E."/>
            <person name="Heisel S."/>
            <person name="Houmiel K.L."/>
            <person name="Jhaveri J."/>
            <person name="Lu J."/>
            <person name="Miller N.M."/>
            <person name="Norton S."/>
            <person name="Chen Q."/>
            <person name="Phoolcharoen W."/>
            <person name="Ohlin V."/>
            <person name="Ondrusek D."/>
            <person name="Pride N."/>
            <person name="Stricklin S.L."/>
            <person name="Sun J."/>
            <person name="Wheeler C."/>
            <person name="Wilson L."/>
            <person name="Zhu H."/>
            <person name="Wood D.W."/>
        </authorList>
    </citation>
    <scope>NUCLEOTIDE SEQUENCE [LARGE SCALE GENOMIC DNA]</scope>
    <source>
        <strain>K84 / ATCC BAA-868</strain>
    </source>
</reference>
<accession>B9JDV0</accession>
<gene>
    <name evidence="1" type="primary">rpsM</name>
    <name type="ordered locus">Arad_2003</name>
</gene>
<name>RS13_RHIR8</name>
<comment type="function">
    <text evidence="1">Located at the top of the head of the 30S subunit, it contacts several helices of the 16S rRNA. In the 70S ribosome it contacts the 23S rRNA (bridge B1a) and protein L5 of the 50S subunit (bridge B1b), connecting the 2 subunits; these bridges are implicated in subunit movement. Contacts the tRNAs in the A and P-sites.</text>
</comment>
<comment type="subunit">
    <text evidence="1">Part of the 30S ribosomal subunit. Forms a loose heterodimer with protein S19. Forms two bridges to the 50S subunit in the 70S ribosome.</text>
</comment>
<comment type="similarity">
    <text evidence="1">Belongs to the universal ribosomal protein uS13 family.</text>
</comment>
<organism>
    <name type="scientific">Rhizobium rhizogenes (strain K84 / ATCC BAA-868)</name>
    <name type="common">Agrobacterium radiobacter</name>
    <dbReference type="NCBI Taxonomy" id="311403"/>
    <lineage>
        <taxon>Bacteria</taxon>
        <taxon>Pseudomonadati</taxon>
        <taxon>Pseudomonadota</taxon>
        <taxon>Alphaproteobacteria</taxon>
        <taxon>Hyphomicrobiales</taxon>
        <taxon>Rhizobiaceae</taxon>
        <taxon>Rhizobium/Agrobacterium group</taxon>
        <taxon>Rhizobium</taxon>
    </lineage>
</organism>